<proteinExistence type="evidence at transcript level"/>
<name>CO2A1_XENLA</name>
<reference key="1">
    <citation type="journal article" date="1991" name="J. Cell Biol.">
        <title>Expression of two nonallelic type II procollagen genes during Xenopus laevis embryogenesis is characterized by stage-specific production of alternatively spliced transcripts.</title>
        <authorList>
            <person name="Su M.W."/>
            <person name="Suzuki H.R."/>
            <person name="Bieker J.J."/>
            <person name="Solursh M."/>
            <person name="Ramirez F."/>
        </authorList>
    </citation>
    <scope>NUCLEOTIDE SEQUENCE [MRNA]</scope>
    <scope>DEVELOPMENTAL STAGE</scope>
</reference>
<reference key="2">
    <citation type="submission" date="2003-03" db="EMBL/GenBank/DDBJ databases">
        <authorList>
            <consortium name="NIH - Xenopus Gene Collection (XGC) project"/>
        </authorList>
    </citation>
    <scope>NUCLEOTIDE SEQUENCE [LARGE SCALE MRNA]</scope>
    <source>
        <tissue>Embryo</tissue>
    </source>
</reference>
<dbReference type="EMBL" id="M63595">
    <property type="protein sequence ID" value="AAA49678.1"/>
    <property type="molecule type" value="mRNA"/>
</dbReference>
<dbReference type="EMBL" id="BC048221">
    <property type="protein sequence ID" value="AAH48221.1"/>
    <property type="molecule type" value="mRNA"/>
</dbReference>
<dbReference type="EMBL" id="BC111515">
    <property type="protein sequence ID" value="AAI11516.1"/>
    <property type="molecule type" value="mRNA"/>
</dbReference>
<dbReference type="PIR" id="A40333">
    <property type="entry name" value="A40333"/>
</dbReference>
<dbReference type="PIR" id="B40333">
    <property type="entry name" value="B40333"/>
</dbReference>
<dbReference type="RefSeq" id="NP_001081258.1">
    <property type="nucleotide sequence ID" value="NM_001087789.1"/>
</dbReference>
<dbReference type="SMR" id="Q91717"/>
<dbReference type="GlyCosmos" id="Q91717">
    <property type="glycosylation" value="1 site, No reported glycans"/>
</dbReference>
<dbReference type="DNASU" id="397738"/>
<dbReference type="GeneID" id="397738"/>
<dbReference type="KEGG" id="xla:397738"/>
<dbReference type="AGR" id="Xenbase:XB-GENE-6252613"/>
<dbReference type="CTD" id="397738"/>
<dbReference type="Xenbase" id="XB-GENE-6252613">
    <property type="gene designation" value="col2a1.L"/>
</dbReference>
<dbReference type="OMA" id="NGMINDW"/>
<dbReference type="OrthoDB" id="8939548at2759"/>
<dbReference type="Proteomes" id="UP000186698">
    <property type="component" value="Chromosome 2L"/>
</dbReference>
<dbReference type="Bgee" id="397738">
    <property type="expression patterns" value="Expressed in internal ear and 7 other cell types or tissues"/>
</dbReference>
<dbReference type="GO" id="GO:0005581">
    <property type="term" value="C:collagen trimer"/>
    <property type="evidence" value="ECO:0007669"/>
    <property type="project" value="UniProtKB-KW"/>
</dbReference>
<dbReference type="GO" id="GO:0062023">
    <property type="term" value="C:collagen-containing extracellular matrix"/>
    <property type="evidence" value="ECO:0000318"/>
    <property type="project" value="GO_Central"/>
</dbReference>
<dbReference type="GO" id="GO:0005615">
    <property type="term" value="C:extracellular space"/>
    <property type="evidence" value="ECO:0000318"/>
    <property type="project" value="GO_Central"/>
</dbReference>
<dbReference type="GO" id="GO:0030020">
    <property type="term" value="F:extracellular matrix structural constituent conferring tensile strength"/>
    <property type="evidence" value="ECO:0000318"/>
    <property type="project" value="GO_Central"/>
</dbReference>
<dbReference type="GO" id="GO:0046872">
    <property type="term" value="F:metal ion binding"/>
    <property type="evidence" value="ECO:0007669"/>
    <property type="project" value="UniProtKB-KW"/>
</dbReference>
<dbReference type="GO" id="GO:0030198">
    <property type="term" value="P:extracellular matrix organization"/>
    <property type="evidence" value="ECO:0007669"/>
    <property type="project" value="TreeGrafter"/>
</dbReference>
<dbReference type="FunFam" id="2.60.120.1000:FF:000001">
    <property type="entry name" value="Collagen alpha-1 type I chain"/>
    <property type="match status" value="1"/>
</dbReference>
<dbReference type="FunFam" id="2.10.70.10:FF:000013">
    <property type="entry name" value="Collagen, type I, alpha 1"/>
    <property type="match status" value="1"/>
</dbReference>
<dbReference type="Gene3D" id="2.60.120.1000">
    <property type="match status" value="1"/>
</dbReference>
<dbReference type="Gene3D" id="2.10.70.10">
    <property type="entry name" value="Complement Module, domain 1"/>
    <property type="match status" value="1"/>
</dbReference>
<dbReference type="InterPro" id="IPR008160">
    <property type="entry name" value="Collagen"/>
</dbReference>
<dbReference type="InterPro" id="IPR050149">
    <property type="entry name" value="Collagen_superfamily"/>
</dbReference>
<dbReference type="InterPro" id="IPR000885">
    <property type="entry name" value="Fib_collagen_C"/>
</dbReference>
<dbReference type="InterPro" id="IPR001007">
    <property type="entry name" value="VWF_dom"/>
</dbReference>
<dbReference type="PANTHER" id="PTHR24023">
    <property type="entry name" value="COLLAGEN ALPHA"/>
    <property type="match status" value="1"/>
</dbReference>
<dbReference type="PANTHER" id="PTHR24023:SF1082">
    <property type="entry name" value="COLLAGEN TRIPLE HELIX REPEAT"/>
    <property type="match status" value="1"/>
</dbReference>
<dbReference type="Pfam" id="PF01410">
    <property type="entry name" value="COLFI"/>
    <property type="match status" value="1"/>
</dbReference>
<dbReference type="Pfam" id="PF01391">
    <property type="entry name" value="Collagen"/>
    <property type="match status" value="7"/>
</dbReference>
<dbReference type="Pfam" id="PF00093">
    <property type="entry name" value="VWC"/>
    <property type="match status" value="1"/>
</dbReference>
<dbReference type="SMART" id="SM00038">
    <property type="entry name" value="COLFI"/>
    <property type="match status" value="1"/>
</dbReference>
<dbReference type="SMART" id="SM00214">
    <property type="entry name" value="VWC"/>
    <property type="match status" value="1"/>
</dbReference>
<dbReference type="SUPFAM" id="SSF57603">
    <property type="entry name" value="FnI-like domain"/>
    <property type="match status" value="1"/>
</dbReference>
<dbReference type="PROSITE" id="PS51461">
    <property type="entry name" value="NC1_FIB"/>
    <property type="match status" value="1"/>
</dbReference>
<dbReference type="PROSITE" id="PS01208">
    <property type="entry name" value="VWFC_1"/>
    <property type="match status" value="1"/>
</dbReference>
<dbReference type="PROSITE" id="PS50184">
    <property type="entry name" value="VWFC_2"/>
    <property type="match status" value="1"/>
</dbReference>
<comment type="function">
    <text evidence="1">Type II collagen is specific for cartilaginous tissues. It is essential for the normal embryonic development of the skeleton, for linear growth and for the ability of cartilage to resist compressive forces (By similarity).</text>
</comment>
<comment type="subunit">
    <text evidence="1">Homotrimers of alpha 1(II) chains.</text>
</comment>
<comment type="subcellular location">
    <subcellularLocation>
        <location evidence="6">Secreted</location>
        <location evidence="6">Extracellular space</location>
        <location evidence="6">Extracellular matrix</location>
    </subcellularLocation>
</comment>
<comment type="developmental stage">
    <text evidence="8">Initially, the transcripts are localized to notochord, somites, and the dorsal region of the lateral plate mesoderm. At later stages of development and parallel to increased mRNA accumulation, collagen expression becomes progressively more confined to chondrogenic regions of the tadpole.</text>
</comment>
<comment type="domain">
    <text evidence="1">The C-terminal propeptide, also known as COLFI domain, have crucial roles in tissue growth and repair by controlling both the intracellular assembly of procollagen molecules and the extracellular assembly of collagen fibrils. It binds a calcium ion which is essential for its function (By similarity).</text>
</comment>
<comment type="PTM">
    <text evidence="3">Contains mostly 4-hydroxyproline. Prolines at the third position of the tripeptide repeating unit (G-X-P) are 4-hydroxylated in some or all of the chains.</text>
</comment>
<comment type="PTM">
    <text evidence="3">Contains 3-hydroxyproline at a few sites. This modification occurs on the first proline residue in the sequence motif Gly-Pro-Hyp, where Hyp is 4-hydroxyproline.</text>
</comment>
<comment type="PTM">
    <text evidence="3">Lysine residues at the third position of the tripeptide repeating unit (G-X-Y) are 5-hydroxylated in some or all of the chains.</text>
</comment>
<comment type="PTM">
    <text evidence="3">O-glycosylated on hydroxylated lysine residues. The O-linked glycan consists of a Glc-Gal disaccharide.</text>
</comment>
<comment type="similarity">
    <text evidence="6">Belongs to the fibrillar collagen family.</text>
</comment>
<gene>
    <name evidence="2" type="primary">col2a1</name>
</gene>
<keyword id="KW-0106">Calcium</keyword>
<keyword id="KW-0176">Collagen</keyword>
<keyword id="KW-1015">Disulfide bond</keyword>
<keyword id="KW-0272">Extracellular matrix</keyword>
<keyword id="KW-0325">Glycoprotein</keyword>
<keyword id="KW-0379">Hydroxylation</keyword>
<keyword id="KW-0479">Metal-binding</keyword>
<keyword id="KW-1185">Reference proteome</keyword>
<keyword id="KW-0677">Repeat</keyword>
<keyword id="KW-0964">Secreted</keyword>
<keyword id="KW-0732">Signal</keyword>
<protein>
    <recommendedName>
        <fullName evidence="2">Collagen alpha-1(II) chain</fullName>
    </recommendedName>
    <alternativeName>
        <fullName evidence="2">Alpha-1 type II collagen</fullName>
    </alternativeName>
</protein>
<accession>Q91717</accession>
<accession>Q7ZTI6</accession>
<feature type="signal peptide" evidence="4">
    <location>
        <begin position="1"/>
        <end position="26"/>
    </location>
</feature>
<feature type="propeptide" id="PRO_0000286178" description="N-terminal propeptide" evidence="1">
    <location>
        <begin position="27"/>
        <end position="183"/>
    </location>
</feature>
<feature type="chain" id="PRO_0000286179" description="Collagen alpha-1(II) chain">
    <location>
        <begin position="184"/>
        <end position="1243"/>
    </location>
</feature>
<feature type="propeptide" id="PRO_0000286180" description="C-terminal propeptide" evidence="1">
    <location>
        <begin position="1244"/>
        <end position="1486"/>
    </location>
</feature>
<feature type="domain" description="VWFC" evidence="5">
    <location>
        <begin position="36"/>
        <end position="94"/>
    </location>
</feature>
<feature type="domain" description="Fibrillar collagen NC1" evidence="6">
    <location>
        <begin position="1252"/>
        <end position="1486"/>
    </location>
</feature>
<feature type="region of interest" description="Disordered" evidence="7">
    <location>
        <begin position="100"/>
        <end position="1241"/>
    </location>
</feature>
<feature type="region of interest" description="Triple-helical region">
    <location>
        <begin position="203"/>
        <end position="1216"/>
    </location>
</feature>
<feature type="region of interest" description="Nonhelical region (C-terminal)">
    <location>
        <begin position="1217"/>
        <end position="1243"/>
    </location>
</feature>
<feature type="compositionally biased region" description="Basic and acidic residues" evidence="7">
    <location>
        <begin position="110"/>
        <end position="121"/>
    </location>
</feature>
<feature type="compositionally biased region" description="Basic and acidic residues" evidence="7">
    <location>
        <begin position="138"/>
        <end position="159"/>
    </location>
</feature>
<feature type="compositionally biased region" description="Pro residues" evidence="7">
    <location>
        <begin position="163"/>
        <end position="175"/>
    </location>
</feature>
<feature type="compositionally biased region" description="Low complexity" evidence="7">
    <location>
        <begin position="194"/>
        <end position="205"/>
    </location>
</feature>
<feature type="compositionally biased region" description="Pro residues" evidence="7">
    <location>
        <begin position="210"/>
        <end position="219"/>
    </location>
</feature>
<feature type="compositionally biased region" description="Low complexity" evidence="7">
    <location>
        <begin position="220"/>
        <end position="231"/>
    </location>
</feature>
<feature type="compositionally biased region" description="Gly residues" evidence="7">
    <location>
        <begin position="233"/>
        <end position="242"/>
    </location>
</feature>
<feature type="compositionally biased region" description="Basic and acidic residues" evidence="7">
    <location>
        <begin position="253"/>
        <end position="267"/>
    </location>
</feature>
<feature type="compositionally biased region" description="Gly residues" evidence="7">
    <location>
        <begin position="308"/>
        <end position="317"/>
    </location>
</feature>
<feature type="compositionally biased region" description="Low complexity" evidence="7">
    <location>
        <begin position="318"/>
        <end position="330"/>
    </location>
</feature>
<feature type="compositionally biased region" description="Low complexity" evidence="7">
    <location>
        <begin position="337"/>
        <end position="346"/>
    </location>
</feature>
<feature type="compositionally biased region" description="Low complexity" evidence="7">
    <location>
        <begin position="363"/>
        <end position="373"/>
    </location>
</feature>
<feature type="compositionally biased region" description="Low complexity" evidence="7">
    <location>
        <begin position="393"/>
        <end position="421"/>
    </location>
</feature>
<feature type="compositionally biased region" description="Gly residues" evidence="7">
    <location>
        <begin position="422"/>
        <end position="431"/>
    </location>
</feature>
<feature type="compositionally biased region" description="Pro residues" evidence="7">
    <location>
        <begin position="435"/>
        <end position="444"/>
    </location>
</feature>
<feature type="compositionally biased region" description="Low complexity" evidence="7">
    <location>
        <begin position="478"/>
        <end position="487"/>
    </location>
</feature>
<feature type="compositionally biased region" description="Low complexity" evidence="7">
    <location>
        <begin position="498"/>
        <end position="517"/>
    </location>
</feature>
<feature type="compositionally biased region" description="Gly residues" evidence="7">
    <location>
        <begin position="536"/>
        <end position="551"/>
    </location>
</feature>
<feature type="compositionally biased region" description="Low complexity" evidence="7">
    <location>
        <begin position="708"/>
        <end position="732"/>
    </location>
</feature>
<feature type="compositionally biased region" description="Basic and acidic residues" evidence="7">
    <location>
        <begin position="766"/>
        <end position="777"/>
    </location>
</feature>
<feature type="compositionally biased region" description="Low complexity" evidence="7">
    <location>
        <begin position="891"/>
        <end position="904"/>
    </location>
</feature>
<feature type="compositionally biased region" description="Pro residues" evidence="7">
    <location>
        <begin position="913"/>
        <end position="922"/>
    </location>
</feature>
<feature type="compositionally biased region" description="Low complexity" evidence="7">
    <location>
        <begin position="936"/>
        <end position="955"/>
    </location>
</feature>
<feature type="compositionally biased region" description="Gly residues" evidence="7">
    <location>
        <begin position="1007"/>
        <end position="1016"/>
    </location>
</feature>
<feature type="compositionally biased region" description="Low complexity" evidence="7">
    <location>
        <begin position="1102"/>
        <end position="1116"/>
    </location>
</feature>
<feature type="compositionally biased region" description="Basic and acidic residues" evidence="7">
    <location>
        <begin position="1117"/>
        <end position="1131"/>
    </location>
</feature>
<feature type="compositionally biased region" description="Low complexity" evidence="7">
    <location>
        <begin position="1150"/>
        <end position="1159"/>
    </location>
</feature>
<feature type="compositionally biased region" description="Pro residues" evidence="7">
    <location>
        <begin position="1201"/>
        <end position="1218"/>
    </location>
</feature>
<feature type="binding site" evidence="1">
    <location>
        <position position="1300"/>
    </location>
    <ligand>
        <name>Ca(2+)</name>
        <dbReference type="ChEBI" id="CHEBI:29108"/>
    </ligand>
</feature>
<feature type="binding site" evidence="1">
    <location>
        <position position="1302"/>
    </location>
    <ligand>
        <name>Ca(2+)</name>
        <dbReference type="ChEBI" id="CHEBI:29108"/>
    </ligand>
</feature>
<feature type="binding site" evidence="1">
    <location>
        <position position="1303"/>
    </location>
    <ligand>
        <name>Ca(2+)</name>
        <dbReference type="ChEBI" id="CHEBI:29108"/>
    </ligand>
</feature>
<feature type="binding site" evidence="1">
    <location>
        <position position="1305"/>
    </location>
    <ligand>
        <name>Ca(2+)</name>
        <dbReference type="ChEBI" id="CHEBI:29108"/>
    </ligand>
</feature>
<feature type="binding site" evidence="1">
    <location>
        <position position="1308"/>
    </location>
    <ligand>
        <name>Ca(2+)</name>
        <dbReference type="ChEBI" id="CHEBI:29108"/>
    </ligand>
</feature>
<feature type="site" description="Cleavage; by procollagen N-endopeptidase" evidence="1">
    <location>
        <begin position="183"/>
        <end position="184"/>
    </location>
</feature>
<feature type="site" description="Cleavage; by procollagen C-endopeptidase" evidence="1">
    <location>
        <begin position="1243"/>
        <end position="1244"/>
    </location>
</feature>
<feature type="modified residue" description="4-hydroxyproline" evidence="3">
    <location>
        <position position="661"/>
    </location>
</feature>
<feature type="modified residue" description="4-hydroxyproline" evidence="3">
    <location>
        <position position="670"/>
    </location>
</feature>
<feature type="modified residue" description="3-hydroxyproline" evidence="3">
    <location>
        <position position="672"/>
    </location>
</feature>
<feature type="modified residue" description="4-hydroxyproline" evidence="3">
    <location>
        <position position="673"/>
    </location>
</feature>
<feature type="modified residue" description="4-hydroxyproline" evidence="3">
    <location>
        <position position="676"/>
    </location>
</feature>
<feature type="modified residue" description="4-hydroxyproline" evidence="3">
    <location>
        <position position="910"/>
    </location>
</feature>
<feature type="modified residue" description="4-hydroxyproline" evidence="3">
    <location>
        <position position="916"/>
    </location>
</feature>
<feature type="modified residue" description="4-hydroxyproline" evidence="3">
    <location>
        <position position="922"/>
    </location>
</feature>
<feature type="modified residue" description="3-hydroxyproline" evidence="3">
    <location>
        <position position="1146"/>
    </location>
</feature>
<feature type="modified residue" description="3-hydroxyproline" evidence="3">
    <location>
        <position position="1188"/>
    </location>
</feature>
<feature type="modified residue" description="4-hydroxyproline" evidence="3">
    <location>
        <position position="1189"/>
    </location>
</feature>
<feature type="modified residue" description="3-hydroxyproline" evidence="3">
    <location>
        <position position="1203"/>
    </location>
</feature>
<feature type="modified residue" description="4-hydroxyproline" evidence="3">
    <location>
        <position position="1204"/>
    </location>
</feature>
<feature type="modified residue" description="4-hydroxyproline" evidence="3">
    <location>
        <position position="1207"/>
    </location>
</feature>
<feature type="modified residue" description="3-hydroxyproline" evidence="3">
    <location>
        <position position="1209"/>
    </location>
</feature>
<feature type="modified residue" description="4-hydroxyproline" evidence="3">
    <location>
        <position position="1210"/>
    </location>
</feature>
<feature type="modified residue" description="4-hydroxyproline" evidence="3">
    <location>
        <position position="1213"/>
    </location>
</feature>
<feature type="modified residue" description="3-hydroxyproline" evidence="3">
    <location>
        <position position="1215"/>
    </location>
</feature>
<feature type="modified residue" description="4-hydroxyproline" evidence="3">
    <location>
        <position position="1216"/>
    </location>
</feature>
<feature type="glycosylation site" description="N-linked (GlcNAc...) asparagine" evidence="4">
    <location>
        <position position="1387"/>
    </location>
</feature>
<feature type="disulfide bond" evidence="6">
    <location>
        <begin position="1282"/>
        <end position="1314"/>
    </location>
</feature>
<feature type="disulfide bond" description="Interchain (with C-1305)" evidence="6">
    <location>
        <position position="1288"/>
    </location>
</feature>
<feature type="disulfide bond" description="Interchain (with C-1288)" evidence="6">
    <location>
        <position position="1305"/>
    </location>
</feature>
<feature type="disulfide bond" evidence="6">
    <location>
        <begin position="1322"/>
        <end position="1484"/>
    </location>
</feature>
<feature type="disulfide bond" evidence="6">
    <location>
        <begin position="1392"/>
        <end position="1437"/>
    </location>
</feature>
<feature type="sequence conflict" description="In Ref. 1; AAA49678." evidence="9" ref="1">
    <original>Q</original>
    <variation>E</variation>
    <location>
        <position position="456"/>
    </location>
</feature>
<feature type="sequence conflict" description="In Ref. 1; AAA49678." evidence="9" ref="1">
    <original>L</original>
    <variation>I</variation>
    <location>
        <position position="1287"/>
    </location>
</feature>
<feature type="sequence conflict" description="In Ref. 1; AAA49678." evidence="9" ref="1">
    <original>D</original>
    <variation>N</variation>
    <location>
        <position position="1315"/>
    </location>
</feature>
<organism>
    <name type="scientific">Xenopus laevis</name>
    <name type="common">African clawed frog</name>
    <dbReference type="NCBI Taxonomy" id="8355"/>
    <lineage>
        <taxon>Eukaryota</taxon>
        <taxon>Metazoa</taxon>
        <taxon>Chordata</taxon>
        <taxon>Craniata</taxon>
        <taxon>Vertebrata</taxon>
        <taxon>Euteleostomi</taxon>
        <taxon>Amphibia</taxon>
        <taxon>Batrachia</taxon>
        <taxon>Anura</taxon>
        <taxon>Pipoidea</taxon>
        <taxon>Pipidae</taxon>
        <taxon>Xenopodinae</taxon>
        <taxon>Xenopus</taxon>
        <taxon>Xenopus</taxon>
    </lineage>
</organism>
<sequence>MFSFVDSRTLVLFAATQVILLAVVRCQDEEDVLDTGSCVQHGQRYSDKDVWKPEPCQICVCDTGTVLCDDIICEESKDCPNAEIPFGECCPICPTEQSSTSSGQGVLKGQKGEPGDIKDVLGPRGPPGPQGPSGEQGSRGERGDKGEKGAPGPRGRDGEPGTPGNPGPVGPPGPPGLGGNFAAQMTGGFDEKAGGAQMGVMQGPMGPMGPRGPPGPTGAPGPQGFQGNPGEPGEPGAGGPMGPRGPPGPSGKPGDDGEAGKPGKSGERGPPGPQGARGFPGTPGLPGVKGHRGYPGLDGAKGEAGAAGAKGEGGATGEAGSPGPMGPRGLPGERGRPGSSGAAGARGNDGLPGPAGPPGPVGPAGAPGFPGAPGSKGEAGPTGARGPEGAQGPRGESGTPGSPGPAGASGNPGTDGIPGAKGSSGGPGIAGAPGFPGPRGPPGPQGATGPLGPKGQTGDPGVAGFKGEQGPKGEIGSAGPQGAPGPAGEEGKRGARGEPGAAGPNGPPGERGAPGNRGFPGQDGLAGPKGAPGERGVPGLGGPKGGNGDPGRPGEPGLPGARGLTGRPGDAGPQGKVGPSGASGEDGRPGPPGPQGARGQPGVMGFPGPKGANGEPGKAGEKGLVGAPGLRGLPGKDGETGSQGPNGPAGPAGERGEQGPPGPSGFQGLPGPPGSPGEGGKPGDQGVPGEAGAPGLVGPRGERGFPGERGSSGPQGLQGPRGLPGTPGTDGPKGASGPSGPNGAQGPPGLQGMPGERGAAGISGPKGDRGDTGEKGPEGASGKDGSRGLTGPIGPPGPAGPNGEKGESGPSGPPGIVGARGAPGDRGENGPPGPAGFAGPPGADGQSGLKGDQGESGQKGDAGAPGPQGPSGAPGPQGPTGVFGPKGARGAQGPAGATGFPGAAGRVGTPGPNGNPGPPGPPGSAGKEGPKGVRGDAGPPGRAGDPGLQGAAGAPGEKGEPGEDGPSGPDGPPGPQGLSGQRGIVGLPGQRGERGFPGLPGPSGEPGKQGGPGSSGDRGPPGPVGPPGLTGPSGEPGREGNPGSDGPPGRDGATGIKGDRGETGPLGAPGAPGAPGAPGSVGPTGKQGDRGESGPQGPLGPSGPAGARGLAGPQGPRGDKGEAGEAGERGQKGHRGFTGLQGLPGPPGSAGDQGATGPAGPAGPRGPPGPVGPSGKDGSNGISGPIGPPGPRGRSGETGPSGPPGQPGPPGPPGPPGPGIDMSAFAGLSQPEKGPDPMRYMRADQASNSLPVDVEATLKSLNNQIENIRSPDGTKKNPARTCRDLKLCHPEWKSGDYWIDPNQGCTVDAIKVFCDMETGETCVYPNPSKIPKKNWWSAKGKEKKHIWFGETINGGFQFSYGDDSSAPNTANIQMTFLRLLSTDASQNITYHCKNSIAFMDEASGNLKKAVLLQGSNDVEIRAEGNSRFTYNALEDGCKKHTGKWSKTVIEYRTQKTSRLPIVDIAPMDIGGADQEFGVDIGPVCFL</sequence>
<evidence type="ECO:0000250" key="1"/>
<evidence type="ECO:0000250" key="2">
    <source>
        <dbReference type="UniProtKB" id="P02458"/>
    </source>
</evidence>
<evidence type="ECO:0000250" key="3">
    <source>
        <dbReference type="UniProtKB" id="P05539"/>
    </source>
</evidence>
<evidence type="ECO:0000255" key="4"/>
<evidence type="ECO:0000255" key="5">
    <source>
        <dbReference type="PROSITE-ProRule" id="PRU00220"/>
    </source>
</evidence>
<evidence type="ECO:0000255" key="6">
    <source>
        <dbReference type="PROSITE-ProRule" id="PRU00793"/>
    </source>
</evidence>
<evidence type="ECO:0000256" key="7">
    <source>
        <dbReference type="SAM" id="MobiDB-lite"/>
    </source>
</evidence>
<evidence type="ECO:0000269" key="8">
    <source>
    </source>
</evidence>
<evidence type="ECO:0000305" key="9"/>